<keyword id="KW-0028">Amino-acid biosynthesis</keyword>
<keyword id="KW-0032">Aminotransferase</keyword>
<keyword id="KW-0368">Histidine biosynthesis</keyword>
<keyword id="KW-0663">Pyridoxal phosphate</keyword>
<keyword id="KW-0808">Transferase</keyword>
<name>HIS81_HYDCU</name>
<feature type="chain" id="PRO_0000230225" description="Histidinol-phosphate aminotransferase 1">
    <location>
        <begin position="1"/>
        <end position="356"/>
    </location>
</feature>
<feature type="modified residue" description="N6-(pyridoxal phosphate)lysine" evidence="1">
    <location>
        <position position="210"/>
    </location>
</feature>
<protein>
    <recommendedName>
        <fullName evidence="1">Histidinol-phosphate aminotransferase 1</fullName>
        <ecNumber evidence="1">2.6.1.9</ecNumber>
    </recommendedName>
    <alternativeName>
        <fullName evidence="1">Imidazole acetol-phosphate transaminase 1</fullName>
    </alternativeName>
</protein>
<dbReference type="EC" id="2.6.1.9" evidence="1"/>
<dbReference type="EMBL" id="CP000109">
    <property type="protein sequence ID" value="ABB41187.1"/>
    <property type="molecule type" value="Genomic_DNA"/>
</dbReference>
<dbReference type="SMR" id="Q31I36"/>
<dbReference type="STRING" id="317025.Tcr_0591"/>
<dbReference type="KEGG" id="tcx:Tcr_0591"/>
<dbReference type="eggNOG" id="COG0079">
    <property type="taxonomic scope" value="Bacteria"/>
</dbReference>
<dbReference type="HOGENOM" id="CLU_017584_3_0_6"/>
<dbReference type="OrthoDB" id="9809616at2"/>
<dbReference type="UniPathway" id="UPA00031">
    <property type="reaction ID" value="UER00012"/>
</dbReference>
<dbReference type="GO" id="GO:0004400">
    <property type="term" value="F:histidinol-phosphate transaminase activity"/>
    <property type="evidence" value="ECO:0007669"/>
    <property type="project" value="UniProtKB-UniRule"/>
</dbReference>
<dbReference type="GO" id="GO:0030170">
    <property type="term" value="F:pyridoxal phosphate binding"/>
    <property type="evidence" value="ECO:0007669"/>
    <property type="project" value="InterPro"/>
</dbReference>
<dbReference type="GO" id="GO:0000105">
    <property type="term" value="P:L-histidine biosynthetic process"/>
    <property type="evidence" value="ECO:0007669"/>
    <property type="project" value="UniProtKB-UniRule"/>
</dbReference>
<dbReference type="CDD" id="cd00609">
    <property type="entry name" value="AAT_like"/>
    <property type="match status" value="1"/>
</dbReference>
<dbReference type="Gene3D" id="3.90.1150.10">
    <property type="entry name" value="Aspartate Aminotransferase, domain 1"/>
    <property type="match status" value="1"/>
</dbReference>
<dbReference type="Gene3D" id="3.40.640.10">
    <property type="entry name" value="Type I PLP-dependent aspartate aminotransferase-like (Major domain)"/>
    <property type="match status" value="1"/>
</dbReference>
<dbReference type="HAMAP" id="MF_01023">
    <property type="entry name" value="HisC_aminotrans_2"/>
    <property type="match status" value="1"/>
</dbReference>
<dbReference type="InterPro" id="IPR001917">
    <property type="entry name" value="Aminotrans_II_pyridoxalP_BS"/>
</dbReference>
<dbReference type="InterPro" id="IPR004839">
    <property type="entry name" value="Aminotransferase_I/II_large"/>
</dbReference>
<dbReference type="InterPro" id="IPR005861">
    <property type="entry name" value="HisP_aminotrans"/>
</dbReference>
<dbReference type="InterPro" id="IPR050106">
    <property type="entry name" value="HistidinolP_aminotransfase"/>
</dbReference>
<dbReference type="InterPro" id="IPR015424">
    <property type="entry name" value="PyrdxlP-dep_Trfase"/>
</dbReference>
<dbReference type="InterPro" id="IPR015421">
    <property type="entry name" value="PyrdxlP-dep_Trfase_major"/>
</dbReference>
<dbReference type="InterPro" id="IPR015422">
    <property type="entry name" value="PyrdxlP-dep_Trfase_small"/>
</dbReference>
<dbReference type="NCBIfam" id="TIGR01141">
    <property type="entry name" value="hisC"/>
    <property type="match status" value="1"/>
</dbReference>
<dbReference type="PANTHER" id="PTHR43643:SF3">
    <property type="entry name" value="HISTIDINOL-PHOSPHATE AMINOTRANSFERASE"/>
    <property type="match status" value="1"/>
</dbReference>
<dbReference type="PANTHER" id="PTHR43643">
    <property type="entry name" value="HISTIDINOL-PHOSPHATE AMINOTRANSFERASE 2"/>
    <property type="match status" value="1"/>
</dbReference>
<dbReference type="Pfam" id="PF00155">
    <property type="entry name" value="Aminotran_1_2"/>
    <property type="match status" value="1"/>
</dbReference>
<dbReference type="SUPFAM" id="SSF53383">
    <property type="entry name" value="PLP-dependent transferases"/>
    <property type="match status" value="1"/>
</dbReference>
<dbReference type="PROSITE" id="PS00599">
    <property type="entry name" value="AA_TRANSFER_CLASS_2"/>
    <property type="match status" value="1"/>
</dbReference>
<proteinExistence type="inferred from homology"/>
<reference key="1">
    <citation type="journal article" date="2006" name="PLoS Biol.">
        <title>The genome of deep-sea vent chemolithoautotroph Thiomicrospira crunogena XCL-2.</title>
        <authorList>
            <person name="Scott K.M."/>
            <person name="Sievert S.M."/>
            <person name="Abril F.N."/>
            <person name="Ball L.A."/>
            <person name="Barrett C.J."/>
            <person name="Blake R.A."/>
            <person name="Boller A.J."/>
            <person name="Chain P.S.G."/>
            <person name="Clark J.A."/>
            <person name="Davis C.R."/>
            <person name="Detter C."/>
            <person name="Do K.F."/>
            <person name="Dobrinski K.P."/>
            <person name="Faza B.I."/>
            <person name="Fitzpatrick K.A."/>
            <person name="Freyermuth S.K."/>
            <person name="Harmer T.L."/>
            <person name="Hauser L.J."/>
            <person name="Huegler M."/>
            <person name="Kerfeld C.A."/>
            <person name="Klotz M.G."/>
            <person name="Kong W.W."/>
            <person name="Land M."/>
            <person name="Lapidus A."/>
            <person name="Larimer F.W."/>
            <person name="Longo D.L."/>
            <person name="Lucas S."/>
            <person name="Malfatti S.A."/>
            <person name="Massey S.E."/>
            <person name="Martin D.D."/>
            <person name="McCuddin Z."/>
            <person name="Meyer F."/>
            <person name="Moore J.L."/>
            <person name="Ocampo L.H. Jr."/>
            <person name="Paul J.H."/>
            <person name="Paulsen I.T."/>
            <person name="Reep D.K."/>
            <person name="Ren Q."/>
            <person name="Ross R.L."/>
            <person name="Sato P.Y."/>
            <person name="Thomas P."/>
            <person name="Tinkham L.E."/>
            <person name="Zeruth G.T."/>
        </authorList>
    </citation>
    <scope>NUCLEOTIDE SEQUENCE [LARGE SCALE GENOMIC DNA]</scope>
    <source>
        <strain>DSM 25203 / XCL-2</strain>
    </source>
</reference>
<organism>
    <name type="scientific">Hydrogenovibrio crunogenus (strain DSM 25203 / XCL-2)</name>
    <name type="common">Thiomicrospira crunogena</name>
    <dbReference type="NCBI Taxonomy" id="317025"/>
    <lineage>
        <taxon>Bacteria</taxon>
        <taxon>Pseudomonadati</taxon>
        <taxon>Pseudomonadota</taxon>
        <taxon>Gammaproteobacteria</taxon>
        <taxon>Thiotrichales</taxon>
        <taxon>Piscirickettsiaceae</taxon>
        <taxon>Hydrogenovibrio</taxon>
    </lineage>
</organism>
<comment type="catalytic activity">
    <reaction evidence="1">
        <text>L-histidinol phosphate + 2-oxoglutarate = 3-(imidazol-4-yl)-2-oxopropyl phosphate + L-glutamate</text>
        <dbReference type="Rhea" id="RHEA:23744"/>
        <dbReference type="ChEBI" id="CHEBI:16810"/>
        <dbReference type="ChEBI" id="CHEBI:29985"/>
        <dbReference type="ChEBI" id="CHEBI:57766"/>
        <dbReference type="ChEBI" id="CHEBI:57980"/>
        <dbReference type="EC" id="2.6.1.9"/>
    </reaction>
</comment>
<comment type="cofactor">
    <cofactor evidence="1">
        <name>pyridoxal 5'-phosphate</name>
        <dbReference type="ChEBI" id="CHEBI:597326"/>
    </cofactor>
</comment>
<comment type="pathway">
    <text evidence="1">Amino-acid biosynthesis; L-histidine biosynthesis; L-histidine from 5-phospho-alpha-D-ribose 1-diphosphate: step 7/9.</text>
</comment>
<comment type="subunit">
    <text evidence="1">Homodimer.</text>
</comment>
<comment type="similarity">
    <text evidence="1">Belongs to the class-II pyridoxal-phosphate-dependent aminotransferase family. Histidinol-phosphate aminotransferase subfamily.</text>
</comment>
<accession>Q31I36</accession>
<sequence length="356" mass="39889">MSQYWSQLVHTLTPYVPGEQPKVDNLIKLNTNESPYPPSPLVLNALSSQLNDKLRLYPDPSSEDLKQSIATYYGVESNQVFVGNGSDEVLAHAFMTLLKQDKPILFPDISYSFYPVYCGLYEIEHQTIPLTDDFKINPADYNIENGGIIFPNPNAPTGRLLPLQAIEQIVQQNASSVVVVDEAYIDFGGESAAQLVLRYPNLLVVQTFSKSRALAGLRVGFAIGDKALIDGLERVKNSFNSYPLDRLATAGAIAAIEDEPYFQQSCEKIITTRDTLTHFLEDNGFEVIPSAANFVFTRHSEMRAEDIANQLREQAIIVRYFNKPRIDQYLRITIGTEEENTQLCRALTDILKTQNA</sequence>
<evidence type="ECO:0000255" key="1">
    <source>
        <dbReference type="HAMAP-Rule" id="MF_01023"/>
    </source>
</evidence>
<gene>
    <name evidence="1" type="primary">hisC1</name>
    <name type="ordered locus">Tcr_0591</name>
</gene>